<sequence>MSGRGKGGKARAKAKSRSSRAGLQFPVGRVHRFLRKGNYAERVGAGAPVYLAAVMEYLAAEILELAGNAARDNKKTRINPRHLQLAIRNDEELNKLLSGVTIAQGGVLPNIQAVLLPKKTAKAAK</sequence>
<proteinExistence type="evidence at protein level"/>
<comment type="function">
    <text>Core component of nucleosome. Nucleosomes wrap and compact DNA into chromatin, limiting DNA accessibility to the cellular machineries which require DNA as a template. Histones thereby play a central role in transcription regulation, DNA repair, DNA replication and chromosomal stability. DNA accessibility is regulated via a complex set of post-translational modifications of histones, also called histone code, and nucleosome remodeling.</text>
</comment>
<comment type="subunit">
    <text>The nucleosome is a histone octamer containing two molecules each of H2A, H2B, H3 and H4 assembled in one H3-H4 heterotetramer and two H2A-H2B heterodimers. The octamer wraps approximately 147 bp of DNA.</text>
</comment>
<comment type="subcellular location">
    <subcellularLocation>
        <location>Nucleus</location>
    </subcellularLocation>
    <subcellularLocation>
        <location>Chromosome</location>
    </subcellularLocation>
</comment>
<comment type="similarity">
    <text evidence="4">Belongs to the histone H2A family.</text>
</comment>
<evidence type="ECO:0000250" key="1"/>
<evidence type="ECO:0000256" key="2">
    <source>
        <dbReference type="SAM" id="MobiDB-lite"/>
    </source>
</evidence>
<evidence type="ECO:0000269" key="3">
    <source>
    </source>
</evidence>
<evidence type="ECO:0000305" key="4"/>
<reference key="1">
    <citation type="journal article" date="1983" name="Eur. J. Biochem.">
        <title>Primary structure of histone H2A from gonads of the starfish Asterias rubens.</title>
        <authorList>
            <person name="Martinage A."/>
            <person name="Belaiche D."/>
            <person name="Dupressoir T."/>
            <person name="Sautiere P."/>
        </authorList>
    </citation>
    <scope>PROTEIN SEQUENCE OF 2-125</scope>
    <scope>ACETYLATION AT SER-2</scope>
</reference>
<name>H2A_ASTRU</name>
<organism>
    <name type="scientific">Asterias rubens</name>
    <name type="common">Common European starfish</name>
    <name type="synonym">Asterias vulgaris</name>
    <dbReference type="NCBI Taxonomy" id="7604"/>
    <lineage>
        <taxon>Eukaryota</taxon>
        <taxon>Metazoa</taxon>
        <taxon>Echinodermata</taxon>
        <taxon>Eleutherozoa</taxon>
        <taxon>Asterozoa</taxon>
        <taxon>Asteroidea</taxon>
        <taxon>Forcipulatacea</taxon>
        <taxon>Forcipulatida</taxon>
        <taxon>Asteriidae</taxon>
        <taxon>Asterias</taxon>
    </lineage>
</organism>
<dbReference type="PIR" id="A02596">
    <property type="entry name" value="HSSF2"/>
</dbReference>
<dbReference type="SMR" id="P02269"/>
<dbReference type="iPTMnet" id="P02269"/>
<dbReference type="OrthoDB" id="10253031at2759"/>
<dbReference type="GO" id="GO:0000786">
    <property type="term" value="C:nucleosome"/>
    <property type="evidence" value="ECO:0007669"/>
    <property type="project" value="UniProtKB-KW"/>
</dbReference>
<dbReference type="GO" id="GO:0005634">
    <property type="term" value="C:nucleus"/>
    <property type="evidence" value="ECO:0007669"/>
    <property type="project" value="UniProtKB-SubCell"/>
</dbReference>
<dbReference type="GO" id="GO:0003677">
    <property type="term" value="F:DNA binding"/>
    <property type="evidence" value="ECO:0007669"/>
    <property type="project" value="UniProtKB-KW"/>
</dbReference>
<dbReference type="GO" id="GO:0046982">
    <property type="term" value="F:protein heterodimerization activity"/>
    <property type="evidence" value="ECO:0007669"/>
    <property type="project" value="InterPro"/>
</dbReference>
<dbReference type="GO" id="GO:0030527">
    <property type="term" value="F:structural constituent of chromatin"/>
    <property type="evidence" value="ECO:0007669"/>
    <property type="project" value="InterPro"/>
</dbReference>
<dbReference type="CDD" id="cd00074">
    <property type="entry name" value="HFD_H2A"/>
    <property type="match status" value="1"/>
</dbReference>
<dbReference type="FunFam" id="1.10.20.10:FF:000020">
    <property type="entry name" value="Histone H2A"/>
    <property type="match status" value="1"/>
</dbReference>
<dbReference type="Gene3D" id="1.10.20.10">
    <property type="entry name" value="Histone, subunit A"/>
    <property type="match status" value="1"/>
</dbReference>
<dbReference type="InterPro" id="IPR009072">
    <property type="entry name" value="Histone-fold"/>
</dbReference>
<dbReference type="InterPro" id="IPR002119">
    <property type="entry name" value="Histone_H2A"/>
</dbReference>
<dbReference type="InterPro" id="IPR007125">
    <property type="entry name" value="Histone_H2A/H2B/H3"/>
</dbReference>
<dbReference type="InterPro" id="IPR032454">
    <property type="entry name" value="Histone_H2A_C"/>
</dbReference>
<dbReference type="InterPro" id="IPR032458">
    <property type="entry name" value="Histone_H2A_CS"/>
</dbReference>
<dbReference type="PANTHER" id="PTHR23430">
    <property type="entry name" value="HISTONE H2A"/>
    <property type="match status" value="1"/>
</dbReference>
<dbReference type="Pfam" id="PF00125">
    <property type="entry name" value="Histone"/>
    <property type="match status" value="1"/>
</dbReference>
<dbReference type="Pfam" id="PF16211">
    <property type="entry name" value="Histone_H2A_C"/>
    <property type="match status" value="1"/>
</dbReference>
<dbReference type="PRINTS" id="PR00620">
    <property type="entry name" value="HISTONEH2A"/>
</dbReference>
<dbReference type="SMART" id="SM00414">
    <property type="entry name" value="H2A"/>
    <property type="match status" value="1"/>
</dbReference>
<dbReference type="SUPFAM" id="SSF47113">
    <property type="entry name" value="Histone-fold"/>
    <property type="match status" value="1"/>
</dbReference>
<dbReference type="PROSITE" id="PS00046">
    <property type="entry name" value="HISTONE_H2A"/>
    <property type="match status" value="1"/>
</dbReference>
<protein>
    <recommendedName>
        <fullName>Histone H2A</fullName>
    </recommendedName>
</protein>
<feature type="initiator methionine" description="Removed" evidence="3">
    <location>
        <position position="1"/>
    </location>
</feature>
<feature type="chain" id="PRO_0000055208" description="Histone H2A">
    <location>
        <begin position="2"/>
        <end position="125"/>
    </location>
</feature>
<feature type="region of interest" description="Disordered" evidence="2">
    <location>
        <begin position="1"/>
        <end position="21"/>
    </location>
</feature>
<feature type="compositionally biased region" description="Basic residues" evidence="2">
    <location>
        <begin position="1"/>
        <end position="18"/>
    </location>
</feature>
<feature type="modified residue" description="N-acetylserine" evidence="3">
    <location>
        <position position="2"/>
    </location>
</feature>
<feature type="modified residue" description="Phosphoserine" evidence="1">
    <location>
        <position position="2"/>
    </location>
</feature>
<feature type="modified residue" description="N5-methylglutamine" evidence="1">
    <location>
        <position position="104"/>
    </location>
</feature>
<feature type="sequence variant">
    <original>S</original>
    <variation>A</variation>
    <location>
        <position position="19"/>
    </location>
</feature>
<feature type="sequence variant">
    <original>E</original>
    <variation>Q</variation>
    <location>
        <position position="41"/>
    </location>
</feature>
<feature type="sequence variant">
    <original>L</original>
    <variation>N</variation>
    <location>
        <position position="51"/>
    </location>
</feature>
<keyword id="KW-0007">Acetylation</keyword>
<keyword id="KW-0158">Chromosome</keyword>
<keyword id="KW-0903">Direct protein sequencing</keyword>
<keyword id="KW-0238">DNA-binding</keyword>
<keyword id="KW-0488">Methylation</keyword>
<keyword id="KW-0544">Nucleosome core</keyword>
<keyword id="KW-0539">Nucleus</keyword>
<keyword id="KW-0597">Phosphoprotein</keyword>
<accession>P02269</accession>